<gene>
    <name evidence="1" type="primary">deoB</name>
    <name type="ordered locus">BCG9842_B1040</name>
</gene>
<name>DEOB_BACC2</name>
<sequence length="394" mass="44020">MNKYKRIFLVVMDSVGIGEAPDAEQFGDLGSDTIGHIAEHMNGLQMPNMVKLGLGNIREMKGISKVEKPLGYYTKMQEKSTGKDTMTGHWEIMGLYIDTPFQVFPEGFPKELLDELEEKTGRKIIGNKPASGTEILDELGQEQMETGSLIVYTSADSVLQIAAHEEVVPLDELYKICKIARELTLDEKYMVGRVIARPFVGEPGNFTRTPNRHDYALKPFGRTVMNELKDSDYDVIAIGKISDIYDGEGVTESLRTKSNMDGMDKLVDTLNMDFTGLSFLNLVDFDALFGHRRDPQGYGEALQEYDARLPEVFAKLQEDDLLLITADHGNDPIHPGTDHTREYVPLLAYSPSMKEGGQELPLRQTFADIGATVAENFGVKMPEYGTSFLNELKK</sequence>
<keyword id="KW-0963">Cytoplasm</keyword>
<keyword id="KW-0413">Isomerase</keyword>
<keyword id="KW-0464">Manganese</keyword>
<keyword id="KW-0479">Metal-binding</keyword>
<comment type="function">
    <text evidence="1">Isomerase that catalyzes the conversion of deoxy-ribose 1-phosphate (dRib-1-P) and ribose 1-phosphate (Rib-1-P) to deoxy-ribose 5-phosphate (dRib-5-P) and ribose 5-phosphate (Rib-5-P), respectively.</text>
</comment>
<comment type="catalytic activity">
    <reaction evidence="1">
        <text>2-deoxy-alpha-D-ribose 1-phosphate = 2-deoxy-D-ribose 5-phosphate</text>
        <dbReference type="Rhea" id="RHEA:27658"/>
        <dbReference type="ChEBI" id="CHEBI:57259"/>
        <dbReference type="ChEBI" id="CHEBI:62877"/>
        <dbReference type="EC" id="5.4.2.7"/>
    </reaction>
</comment>
<comment type="catalytic activity">
    <reaction evidence="1">
        <text>alpha-D-ribose 1-phosphate = D-ribose 5-phosphate</text>
        <dbReference type="Rhea" id="RHEA:18793"/>
        <dbReference type="ChEBI" id="CHEBI:57720"/>
        <dbReference type="ChEBI" id="CHEBI:78346"/>
        <dbReference type="EC" id="5.4.2.7"/>
    </reaction>
</comment>
<comment type="cofactor">
    <cofactor evidence="1">
        <name>Mn(2+)</name>
        <dbReference type="ChEBI" id="CHEBI:29035"/>
    </cofactor>
    <text evidence="1">Binds 2 manganese ions.</text>
</comment>
<comment type="pathway">
    <text evidence="1">Carbohydrate degradation; 2-deoxy-D-ribose 1-phosphate degradation; D-glyceraldehyde 3-phosphate and acetaldehyde from 2-deoxy-alpha-D-ribose 1-phosphate: step 1/2.</text>
</comment>
<comment type="subcellular location">
    <subcellularLocation>
        <location evidence="1">Cytoplasm</location>
    </subcellularLocation>
</comment>
<comment type="similarity">
    <text evidence="1">Belongs to the phosphopentomutase family.</text>
</comment>
<dbReference type="EC" id="5.4.2.7" evidence="1"/>
<dbReference type="EMBL" id="CP001186">
    <property type="protein sequence ID" value="ACK95168.1"/>
    <property type="molecule type" value="Genomic_DNA"/>
</dbReference>
<dbReference type="RefSeq" id="WP_001046081.1">
    <property type="nucleotide sequence ID" value="NC_011772.1"/>
</dbReference>
<dbReference type="SMR" id="B7IWK1"/>
<dbReference type="KEGG" id="bcg:BCG9842_B1040"/>
<dbReference type="HOGENOM" id="CLU_053861_0_0_9"/>
<dbReference type="UniPathway" id="UPA00002">
    <property type="reaction ID" value="UER00467"/>
</dbReference>
<dbReference type="Proteomes" id="UP000006744">
    <property type="component" value="Chromosome"/>
</dbReference>
<dbReference type="GO" id="GO:0005829">
    <property type="term" value="C:cytosol"/>
    <property type="evidence" value="ECO:0007669"/>
    <property type="project" value="TreeGrafter"/>
</dbReference>
<dbReference type="GO" id="GO:0000287">
    <property type="term" value="F:magnesium ion binding"/>
    <property type="evidence" value="ECO:0007669"/>
    <property type="project" value="InterPro"/>
</dbReference>
<dbReference type="GO" id="GO:0030145">
    <property type="term" value="F:manganese ion binding"/>
    <property type="evidence" value="ECO:0007669"/>
    <property type="project" value="UniProtKB-UniRule"/>
</dbReference>
<dbReference type="GO" id="GO:0008973">
    <property type="term" value="F:phosphopentomutase activity"/>
    <property type="evidence" value="ECO:0007669"/>
    <property type="project" value="UniProtKB-UniRule"/>
</dbReference>
<dbReference type="GO" id="GO:0006018">
    <property type="term" value="P:2-deoxyribose 1-phosphate catabolic process"/>
    <property type="evidence" value="ECO:0007669"/>
    <property type="project" value="UniProtKB-UniRule"/>
</dbReference>
<dbReference type="GO" id="GO:0006015">
    <property type="term" value="P:5-phosphoribose 1-diphosphate biosynthetic process"/>
    <property type="evidence" value="ECO:0007669"/>
    <property type="project" value="UniProtKB-UniPathway"/>
</dbReference>
<dbReference type="GO" id="GO:0043094">
    <property type="term" value="P:metabolic compound salvage"/>
    <property type="evidence" value="ECO:0007669"/>
    <property type="project" value="InterPro"/>
</dbReference>
<dbReference type="GO" id="GO:0009117">
    <property type="term" value="P:nucleotide metabolic process"/>
    <property type="evidence" value="ECO:0007669"/>
    <property type="project" value="InterPro"/>
</dbReference>
<dbReference type="CDD" id="cd16009">
    <property type="entry name" value="PPM"/>
    <property type="match status" value="1"/>
</dbReference>
<dbReference type="FunFam" id="3.30.70.1250:FF:000001">
    <property type="entry name" value="Phosphopentomutase"/>
    <property type="match status" value="1"/>
</dbReference>
<dbReference type="Gene3D" id="3.40.720.10">
    <property type="entry name" value="Alkaline Phosphatase, subunit A"/>
    <property type="match status" value="1"/>
</dbReference>
<dbReference type="Gene3D" id="3.30.70.1250">
    <property type="entry name" value="Phosphopentomutase"/>
    <property type="match status" value="1"/>
</dbReference>
<dbReference type="HAMAP" id="MF_00740">
    <property type="entry name" value="Phosphopentomut"/>
    <property type="match status" value="1"/>
</dbReference>
<dbReference type="InterPro" id="IPR017850">
    <property type="entry name" value="Alkaline_phosphatase_core_sf"/>
</dbReference>
<dbReference type="InterPro" id="IPR010045">
    <property type="entry name" value="DeoB"/>
</dbReference>
<dbReference type="InterPro" id="IPR006124">
    <property type="entry name" value="Metalloenzyme"/>
</dbReference>
<dbReference type="InterPro" id="IPR024052">
    <property type="entry name" value="Phosphopentomutase_DeoB_cap_sf"/>
</dbReference>
<dbReference type="NCBIfam" id="TIGR01696">
    <property type="entry name" value="deoB"/>
    <property type="match status" value="1"/>
</dbReference>
<dbReference type="NCBIfam" id="NF003766">
    <property type="entry name" value="PRK05362.1"/>
    <property type="match status" value="1"/>
</dbReference>
<dbReference type="PANTHER" id="PTHR21110">
    <property type="entry name" value="PHOSPHOPENTOMUTASE"/>
    <property type="match status" value="1"/>
</dbReference>
<dbReference type="PANTHER" id="PTHR21110:SF0">
    <property type="entry name" value="PHOSPHOPENTOMUTASE"/>
    <property type="match status" value="1"/>
</dbReference>
<dbReference type="Pfam" id="PF01676">
    <property type="entry name" value="Metalloenzyme"/>
    <property type="match status" value="1"/>
</dbReference>
<dbReference type="PIRSF" id="PIRSF001491">
    <property type="entry name" value="Ppentomutase"/>
    <property type="match status" value="1"/>
</dbReference>
<dbReference type="SUPFAM" id="SSF53649">
    <property type="entry name" value="Alkaline phosphatase-like"/>
    <property type="match status" value="1"/>
</dbReference>
<dbReference type="SUPFAM" id="SSF143856">
    <property type="entry name" value="DeoB insert domain-like"/>
    <property type="match status" value="1"/>
</dbReference>
<accession>B7IWK1</accession>
<organism>
    <name type="scientific">Bacillus cereus (strain G9842)</name>
    <dbReference type="NCBI Taxonomy" id="405531"/>
    <lineage>
        <taxon>Bacteria</taxon>
        <taxon>Bacillati</taxon>
        <taxon>Bacillota</taxon>
        <taxon>Bacilli</taxon>
        <taxon>Bacillales</taxon>
        <taxon>Bacillaceae</taxon>
        <taxon>Bacillus</taxon>
        <taxon>Bacillus cereus group</taxon>
    </lineage>
</organism>
<proteinExistence type="inferred from homology"/>
<protein>
    <recommendedName>
        <fullName evidence="1">Phosphopentomutase</fullName>
        <ecNumber evidence="1">5.4.2.7</ecNumber>
    </recommendedName>
    <alternativeName>
        <fullName evidence="1">Phosphodeoxyribomutase</fullName>
    </alternativeName>
</protein>
<evidence type="ECO:0000255" key="1">
    <source>
        <dbReference type="HAMAP-Rule" id="MF_00740"/>
    </source>
</evidence>
<feature type="chain" id="PRO_1000133060" description="Phosphopentomutase">
    <location>
        <begin position="1"/>
        <end position="394"/>
    </location>
</feature>
<feature type="binding site" evidence="1">
    <location>
        <position position="13"/>
    </location>
    <ligand>
        <name>Mn(2+)</name>
        <dbReference type="ChEBI" id="CHEBI:29035"/>
        <label>1</label>
    </ligand>
</feature>
<feature type="binding site" evidence="1">
    <location>
        <position position="286"/>
    </location>
    <ligand>
        <name>Mn(2+)</name>
        <dbReference type="ChEBI" id="CHEBI:29035"/>
        <label>2</label>
    </ligand>
</feature>
<feature type="binding site" evidence="1">
    <location>
        <position position="291"/>
    </location>
    <ligand>
        <name>Mn(2+)</name>
        <dbReference type="ChEBI" id="CHEBI:29035"/>
        <label>2</label>
    </ligand>
</feature>
<feature type="binding site" evidence="1">
    <location>
        <position position="327"/>
    </location>
    <ligand>
        <name>Mn(2+)</name>
        <dbReference type="ChEBI" id="CHEBI:29035"/>
        <label>1</label>
    </ligand>
</feature>
<feature type="binding site" evidence="1">
    <location>
        <position position="328"/>
    </location>
    <ligand>
        <name>Mn(2+)</name>
        <dbReference type="ChEBI" id="CHEBI:29035"/>
        <label>1</label>
    </ligand>
</feature>
<feature type="binding site" evidence="1">
    <location>
        <position position="339"/>
    </location>
    <ligand>
        <name>Mn(2+)</name>
        <dbReference type="ChEBI" id="CHEBI:29035"/>
        <label>2</label>
    </ligand>
</feature>
<reference key="1">
    <citation type="submission" date="2008-10" db="EMBL/GenBank/DDBJ databases">
        <title>Genome sequence of Bacillus cereus G9842.</title>
        <authorList>
            <person name="Dodson R.J."/>
            <person name="Durkin A.S."/>
            <person name="Rosovitz M.J."/>
            <person name="Rasko D.A."/>
            <person name="Hoffmaster A."/>
            <person name="Ravel J."/>
            <person name="Sutton G."/>
        </authorList>
    </citation>
    <scope>NUCLEOTIDE SEQUENCE [LARGE SCALE GENOMIC DNA]</scope>
    <source>
        <strain>G9842</strain>
    </source>
</reference>